<dbReference type="EMBL" id="CP000806">
    <property type="protein sequence ID" value="ACB53794.1"/>
    <property type="molecule type" value="Genomic_DNA"/>
</dbReference>
<dbReference type="RefSeq" id="WP_008277373.1">
    <property type="nucleotide sequence ID" value="NC_010546.1"/>
</dbReference>
<dbReference type="SMR" id="B1WUE0"/>
<dbReference type="STRING" id="43989.cce_4446"/>
<dbReference type="GeneID" id="88769458"/>
<dbReference type="KEGG" id="cyt:cce_4446"/>
<dbReference type="eggNOG" id="ENOG5033AE4">
    <property type="taxonomic scope" value="Bacteria"/>
</dbReference>
<dbReference type="HOGENOM" id="CLU_215774_1_0_3"/>
<dbReference type="Proteomes" id="UP000001203">
    <property type="component" value="Chromosome circular"/>
</dbReference>
<dbReference type="GO" id="GO:0009512">
    <property type="term" value="C:cytochrome b6f complex"/>
    <property type="evidence" value="ECO:0007669"/>
    <property type="project" value="InterPro"/>
</dbReference>
<dbReference type="GO" id="GO:0031676">
    <property type="term" value="C:plasma membrane-derived thylakoid membrane"/>
    <property type="evidence" value="ECO:0007669"/>
    <property type="project" value="UniProtKB-SubCell"/>
</dbReference>
<dbReference type="GO" id="GO:0045158">
    <property type="term" value="F:electron transporter, transferring electrons within cytochrome b6/f complex of photosystem II activity"/>
    <property type="evidence" value="ECO:0007669"/>
    <property type="project" value="InterPro"/>
</dbReference>
<dbReference type="GO" id="GO:0017004">
    <property type="term" value="P:cytochrome complex assembly"/>
    <property type="evidence" value="ECO:0007669"/>
    <property type="project" value="UniProtKB-UniRule"/>
</dbReference>
<dbReference type="GO" id="GO:0015979">
    <property type="term" value="P:photosynthesis"/>
    <property type="evidence" value="ECO:0007669"/>
    <property type="project" value="UniProtKB-KW"/>
</dbReference>
<dbReference type="HAMAP" id="MF_00395">
    <property type="entry name" value="Cytb6_f_PetN"/>
    <property type="match status" value="1"/>
</dbReference>
<dbReference type="InterPro" id="IPR036143">
    <property type="entry name" value="Cytochr_b6-f_cplx_su8_sf"/>
</dbReference>
<dbReference type="InterPro" id="IPR005497">
    <property type="entry name" value="Cytochrome_b6-f_cplx_su8"/>
</dbReference>
<dbReference type="NCBIfam" id="NF011331">
    <property type="entry name" value="PRK14747.1"/>
    <property type="match status" value="1"/>
</dbReference>
<dbReference type="Pfam" id="PF03742">
    <property type="entry name" value="PetN"/>
    <property type="match status" value="1"/>
</dbReference>
<dbReference type="SUPFAM" id="SSF103451">
    <property type="entry name" value="PetN subunit of the cytochrome b6f complex"/>
    <property type="match status" value="1"/>
</dbReference>
<organism>
    <name type="scientific">Crocosphaera subtropica (strain ATCC 51142 / BH68)</name>
    <name type="common">Cyanothece sp. (strain ATCC 51142)</name>
    <dbReference type="NCBI Taxonomy" id="43989"/>
    <lineage>
        <taxon>Bacteria</taxon>
        <taxon>Bacillati</taxon>
        <taxon>Cyanobacteriota</taxon>
        <taxon>Cyanophyceae</taxon>
        <taxon>Oscillatoriophycideae</taxon>
        <taxon>Chroococcales</taxon>
        <taxon>Aphanothecaceae</taxon>
        <taxon>Crocosphaera</taxon>
        <taxon>Crocosphaera subtropica</taxon>
    </lineage>
</organism>
<feature type="chain" id="PRO_1000192354" description="Cytochrome b6-f complex subunit 8">
    <location>
        <begin position="1"/>
        <end position="29"/>
    </location>
</feature>
<feature type="transmembrane region" description="Helical" evidence="1">
    <location>
        <begin position="3"/>
        <end position="23"/>
    </location>
</feature>
<name>PETN_CROS5</name>
<accession>B1WUE0</accession>
<protein>
    <recommendedName>
        <fullName evidence="1">Cytochrome b6-f complex subunit 8</fullName>
    </recommendedName>
    <alternativeName>
        <fullName evidence="1">Cytochrome b6-f complex subunit PetN</fullName>
    </alternativeName>
    <alternativeName>
        <fullName evidence="1">Cytochrome b6-f complex subunit VIII</fullName>
    </alternativeName>
</protein>
<evidence type="ECO:0000255" key="1">
    <source>
        <dbReference type="HAMAP-Rule" id="MF_00395"/>
    </source>
</evidence>
<comment type="function">
    <text evidence="1">Component of the cytochrome b6-f complex, which mediates electron transfer between photosystem II (PSII) and photosystem I (PSI), cyclic electron flow around PSI, and state transitions.</text>
</comment>
<comment type="subunit">
    <text evidence="1">The 4 large subunits of the cytochrome b6-f complex are cytochrome b6, subunit IV (17 kDa polypeptide, PetD), cytochrome f and the Rieske protein, while the 4 small subunits are PetG, PetL, PetM and PetN. The complex functions as a dimer.</text>
</comment>
<comment type="subcellular location">
    <subcellularLocation>
        <location evidence="1">Cellular thylakoid membrane</location>
        <topology evidence="1">Single-pass membrane protein</topology>
    </subcellularLocation>
</comment>
<comment type="similarity">
    <text evidence="1">Belongs to the PetN family.</text>
</comment>
<sequence length="29" mass="3254">MDILALGWVSVLALFTWSIAMVVWGRNGF</sequence>
<reference key="1">
    <citation type="journal article" date="2008" name="Proc. Natl. Acad. Sci. U.S.A.">
        <title>The genome of Cyanothece 51142, a unicellular diazotrophic cyanobacterium important in the marine nitrogen cycle.</title>
        <authorList>
            <person name="Welsh E.A."/>
            <person name="Liberton M."/>
            <person name="Stoeckel J."/>
            <person name="Loh T."/>
            <person name="Elvitigala T."/>
            <person name="Wang C."/>
            <person name="Wollam A."/>
            <person name="Fulton R.S."/>
            <person name="Clifton S.W."/>
            <person name="Jacobs J.M."/>
            <person name="Aurora R."/>
            <person name="Ghosh B.K."/>
            <person name="Sherman L.A."/>
            <person name="Smith R.D."/>
            <person name="Wilson R.K."/>
            <person name="Pakrasi H.B."/>
        </authorList>
    </citation>
    <scope>NUCLEOTIDE SEQUENCE [LARGE SCALE GENOMIC DNA]</scope>
    <source>
        <strain>ATCC 51142 / BH68</strain>
    </source>
</reference>
<gene>
    <name evidence="1" type="primary">petN</name>
    <name type="ordered locus">cce_4446</name>
</gene>
<keyword id="KW-0249">Electron transport</keyword>
<keyword id="KW-0472">Membrane</keyword>
<keyword id="KW-0602">Photosynthesis</keyword>
<keyword id="KW-1185">Reference proteome</keyword>
<keyword id="KW-0793">Thylakoid</keyword>
<keyword id="KW-0812">Transmembrane</keyword>
<keyword id="KW-1133">Transmembrane helix</keyword>
<keyword id="KW-0813">Transport</keyword>
<proteinExistence type="inferred from homology"/>